<evidence type="ECO:0000255" key="1">
    <source>
        <dbReference type="HAMAP-Rule" id="MF_01320"/>
    </source>
</evidence>
<evidence type="ECO:0000256" key="2">
    <source>
        <dbReference type="SAM" id="MobiDB-lite"/>
    </source>
</evidence>
<evidence type="ECO:0000305" key="3"/>
<dbReference type="EMBL" id="CP000728">
    <property type="protein sequence ID" value="ABS42805.1"/>
    <property type="molecule type" value="Genomic_DNA"/>
</dbReference>
<dbReference type="RefSeq" id="WP_003357299.1">
    <property type="nucleotide sequence ID" value="NC_009699.1"/>
</dbReference>
<dbReference type="SMR" id="A7GJ71"/>
<dbReference type="GeneID" id="5187734"/>
<dbReference type="KEGG" id="cbf:CLI_3660"/>
<dbReference type="HOGENOM" id="CLU_036235_2_1_9"/>
<dbReference type="Proteomes" id="UP000002410">
    <property type="component" value="Chromosome"/>
</dbReference>
<dbReference type="GO" id="GO:0015934">
    <property type="term" value="C:large ribosomal subunit"/>
    <property type="evidence" value="ECO:0007669"/>
    <property type="project" value="InterPro"/>
</dbReference>
<dbReference type="GO" id="GO:0019843">
    <property type="term" value="F:rRNA binding"/>
    <property type="evidence" value="ECO:0007669"/>
    <property type="project" value="UniProtKB-UniRule"/>
</dbReference>
<dbReference type="GO" id="GO:0003735">
    <property type="term" value="F:structural constituent of ribosome"/>
    <property type="evidence" value="ECO:0007669"/>
    <property type="project" value="InterPro"/>
</dbReference>
<dbReference type="GO" id="GO:0016740">
    <property type="term" value="F:transferase activity"/>
    <property type="evidence" value="ECO:0007669"/>
    <property type="project" value="InterPro"/>
</dbReference>
<dbReference type="GO" id="GO:0002181">
    <property type="term" value="P:cytoplasmic translation"/>
    <property type="evidence" value="ECO:0007669"/>
    <property type="project" value="TreeGrafter"/>
</dbReference>
<dbReference type="FunFam" id="2.30.30.30:FF:000001">
    <property type="entry name" value="50S ribosomal protein L2"/>
    <property type="match status" value="1"/>
</dbReference>
<dbReference type="FunFam" id="2.40.50.140:FF:000003">
    <property type="entry name" value="50S ribosomal protein L2"/>
    <property type="match status" value="1"/>
</dbReference>
<dbReference type="FunFam" id="4.10.950.10:FF:000001">
    <property type="entry name" value="50S ribosomal protein L2"/>
    <property type="match status" value="1"/>
</dbReference>
<dbReference type="Gene3D" id="2.30.30.30">
    <property type="match status" value="1"/>
</dbReference>
<dbReference type="Gene3D" id="2.40.50.140">
    <property type="entry name" value="Nucleic acid-binding proteins"/>
    <property type="match status" value="1"/>
</dbReference>
<dbReference type="Gene3D" id="4.10.950.10">
    <property type="entry name" value="Ribosomal protein L2, domain 3"/>
    <property type="match status" value="1"/>
</dbReference>
<dbReference type="HAMAP" id="MF_01320_B">
    <property type="entry name" value="Ribosomal_uL2_B"/>
    <property type="match status" value="1"/>
</dbReference>
<dbReference type="InterPro" id="IPR012340">
    <property type="entry name" value="NA-bd_OB-fold"/>
</dbReference>
<dbReference type="InterPro" id="IPR014722">
    <property type="entry name" value="Rib_uL2_dom2"/>
</dbReference>
<dbReference type="InterPro" id="IPR002171">
    <property type="entry name" value="Ribosomal_uL2"/>
</dbReference>
<dbReference type="InterPro" id="IPR005880">
    <property type="entry name" value="Ribosomal_uL2_bac/org-type"/>
</dbReference>
<dbReference type="InterPro" id="IPR022669">
    <property type="entry name" value="Ribosomal_uL2_C"/>
</dbReference>
<dbReference type="InterPro" id="IPR022671">
    <property type="entry name" value="Ribosomal_uL2_CS"/>
</dbReference>
<dbReference type="InterPro" id="IPR014726">
    <property type="entry name" value="Ribosomal_uL2_dom3"/>
</dbReference>
<dbReference type="InterPro" id="IPR022666">
    <property type="entry name" value="Ribosomal_uL2_RNA-bd_dom"/>
</dbReference>
<dbReference type="InterPro" id="IPR008991">
    <property type="entry name" value="Translation_prot_SH3-like_sf"/>
</dbReference>
<dbReference type="NCBIfam" id="TIGR01171">
    <property type="entry name" value="rplB_bact"/>
    <property type="match status" value="1"/>
</dbReference>
<dbReference type="PANTHER" id="PTHR13691:SF5">
    <property type="entry name" value="LARGE RIBOSOMAL SUBUNIT PROTEIN UL2M"/>
    <property type="match status" value="1"/>
</dbReference>
<dbReference type="PANTHER" id="PTHR13691">
    <property type="entry name" value="RIBOSOMAL PROTEIN L2"/>
    <property type="match status" value="1"/>
</dbReference>
<dbReference type="Pfam" id="PF00181">
    <property type="entry name" value="Ribosomal_L2"/>
    <property type="match status" value="1"/>
</dbReference>
<dbReference type="Pfam" id="PF03947">
    <property type="entry name" value="Ribosomal_L2_C"/>
    <property type="match status" value="1"/>
</dbReference>
<dbReference type="PIRSF" id="PIRSF002158">
    <property type="entry name" value="Ribosomal_L2"/>
    <property type="match status" value="1"/>
</dbReference>
<dbReference type="SMART" id="SM01383">
    <property type="entry name" value="Ribosomal_L2"/>
    <property type="match status" value="1"/>
</dbReference>
<dbReference type="SMART" id="SM01382">
    <property type="entry name" value="Ribosomal_L2_C"/>
    <property type="match status" value="1"/>
</dbReference>
<dbReference type="SUPFAM" id="SSF50249">
    <property type="entry name" value="Nucleic acid-binding proteins"/>
    <property type="match status" value="1"/>
</dbReference>
<dbReference type="SUPFAM" id="SSF50104">
    <property type="entry name" value="Translation proteins SH3-like domain"/>
    <property type="match status" value="1"/>
</dbReference>
<dbReference type="PROSITE" id="PS00467">
    <property type="entry name" value="RIBOSOMAL_L2"/>
    <property type="match status" value="1"/>
</dbReference>
<reference key="1">
    <citation type="submission" date="2007-06" db="EMBL/GenBank/DDBJ databases">
        <authorList>
            <person name="Brinkac L.M."/>
            <person name="Daugherty S."/>
            <person name="Dodson R.J."/>
            <person name="Madupu R."/>
            <person name="Brown J.L."/>
            <person name="Bruce D."/>
            <person name="Detter C."/>
            <person name="Munk C."/>
            <person name="Smith L.A."/>
            <person name="Smith T.J."/>
            <person name="White O."/>
            <person name="Brettin T.S."/>
        </authorList>
    </citation>
    <scope>NUCLEOTIDE SEQUENCE [LARGE SCALE GENOMIC DNA]</scope>
    <source>
        <strain>Langeland / NCTC 10281 / Type F</strain>
    </source>
</reference>
<proteinExistence type="inferred from homology"/>
<comment type="function">
    <text evidence="1">One of the primary rRNA binding proteins. Required for association of the 30S and 50S subunits to form the 70S ribosome, for tRNA binding and peptide bond formation. It has been suggested to have peptidyltransferase activity; this is somewhat controversial. Makes several contacts with the 16S rRNA in the 70S ribosome.</text>
</comment>
<comment type="subunit">
    <text evidence="1">Part of the 50S ribosomal subunit. Forms a bridge to the 30S subunit in the 70S ribosome.</text>
</comment>
<comment type="similarity">
    <text evidence="1">Belongs to the universal ribosomal protein uL2 family.</text>
</comment>
<name>RL2_CLOBL</name>
<protein>
    <recommendedName>
        <fullName evidence="1">Large ribosomal subunit protein uL2</fullName>
    </recommendedName>
    <alternativeName>
        <fullName evidence="3">50S ribosomal protein L2</fullName>
    </alternativeName>
</protein>
<accession>A7GJ71</accession>
<organism>
    <name type="scientific">Clostridium botulinum (strain Langeland / NCTC 10281 / Type F)</name>
    <dbReference type="NCBI Taxonomy" id="441772"/>
    <lineage>
        <taxon>Bacteria</taxon>
        <taxon>Bacillati</taxon>
        <taxon>Bacillota</taxon>
        <taxon>Clostridia</taxon>
        <taxon>Eubacteriales</taxon>
        <taxon>Clostridiaceae</taxon>
        <taxon>Clostridium</taxon>
    </lineage>
</organism>
<gene>
    <name evidence="1" type="primary">rplB</name>
    <name type="ordered locus">CLI_3660</name>
</gene>
<sequence length="277" mass="30345">MAVKGFRPTTPTRREMTMCTFEEITTSTPEKSLLVSLKKSGGRNANGKITVRHIGGGAKRKYRIIDFKRNKDNIPAKVVSIEYDPNRTAFIALVVYADGEKRYIIAPVGLKVGDTVVSGPESDIKVGNCLPIRNIPVGTVIHNIELAAGKGAQLVRSAGNSAQLMAKEGDYSQVRLPSGEVRYIRVECRATIGVVSNQTSEIVNIGKAGRKRHMGVRPTVRGSVMNPNDHPHGGGEGRSPIGHPSPRTPWGKPALGYKTRKNKKYSDRFIVKRRHDK</sequence>
<keyword id="KW-0687">Ribonucleoprotein</keyword>
<keyword id="KW-0689">Ribosomal protein</keyword>
<keyword id="KW-0694">RNA-binding</keyword>
<keyword id="KW-0699">rRNA-binding</keyword>
<feature type="chain" id="PRO_0000309900" description="Large ribosomal subunit protein uL2">
    <location>
        <begin position="1"/>
        <end position="277"/>
    </location>
</feature>
<feature type="region of interest" description="Disordered" evidence="2">
    <location>
        <begin position="219"/>
        <end position="277"/>
    </location>
</feature>